<proteinExistence type="evidence at protein level"/>
<feature type="chain" id="PRO_0000417859" description="Protein UL29/UL28">
    <location>
        <begin position="1"/>
        <end position="701"/>
    </location>
</feature>
<feature type="region of interest" description="Disordered" evidence="1">
    <location>
        <begin position="1"/>
        <end position="33"/>
    </location>
</feature>
<sequence length="701" mass="79053">MSGRRKGCSAATASSSSSSPPSRLPPLPGHARRPRRKRCLVPEVFCTRDLADLCVRRDYEGLRRYLRRFEGSCVSLGWPSQCIYVVGGEHSPHSLTEIDLEHCQNDFFGEFRALHLIGTVSHATCRYQVFVDAYGAVFAYDAQEDCLYELASDLAGFFAKGMIRCDPVHESICARLQPNVPLVHPDHRAELCRRSRASARGRYLRSLLAFRELLACEDTAARCAYVEAHREAQLTLIWPEKHSLVLRTARDLGLSASMLRRFQRSLYTREPVMPLGEIEGAEDKTFFHRVRILCGDTGTVYAALVGQDKLVRLARDLRGFVRVGLALLIDDFRYESIGPVDRSSLYEANPELRLPFKKRRLVVGYFDSLSSLYLRGQPKFSSIWRGLRDAWTHKRPKPRERASGVHLQRYVRATAGRWLPLCWPPLHGIMLGDTQYFGVVRDHKTYRRFSCLRQAGRLYFIGLVSVYECVPDANTAPEIWVSGHGHAFAYLPGEDKVYVLGLSFGEFFENGLFAVYSFFERDYVDEIVEGAWFKHTFAGMYELSQILHDRANLLRVCQLHAGSKIRLGGSPACTFTFGSWNVAEADEANNFVIGVLEQAHFVVIGWMEPVNKAVFMDAHGGIHVLLYGTMLVKLAETLRGFIRQGSFWFRCPRRFCFSPLDSSATVAAKPVSSHTSPAYDVSEYVFSGRSVLDSVSGTGAS</sequence>
<comment type="function">
    <text evidence="2">Contributes to activation of immediate-early gene expression.</text>
</comment>
<comment type="subunit">
    <text evidence="3">Interacts with UL38 and host HDAC1; these interactions are necessary for the HDAC1 interaction with UL38. Interacts with host MTA2.</text>
</comment>
<comment type="subcellular location">
    <subcellularLocation>
        <location evidence="2">Virion</location>
    </subcellularLocation>
    <subcellularLocation>
        <location evidence="2">Host nucleus</location>
    </subcellularLocation>
    <subcellularLocation>
        <location evidence="2">Host cytoplasm</location>
    </subcellularLocation>
    <text>Expressed exclusively within the host nucleus in early times of infection and then present in both nucleus and cytoplasm at 72 hours post infection.</text>
</comment>
<comment type="similarity">
    <text evidence="4">Belongs to the herpesviridae US22 family.</text>
</comment>
<keyword id="KW-0244">Early protein</keyword>
<keyword id="KW-1035">Host cytoplasm</keyword>
<keyword id="KW-1048">Host nucleus</keyword>
<keyword id="KW-1185">Reference proteome</keyword>
<keyword id="KW-0946">Virion</keyword>
<gene>
    <name type="primary">UL29</name>
</gene>
<reference key="1">
    <citation type="journal article" date="1990" name="Curr. Top. Microbiol. Immunol.">
        <title>Analysis of the protein-coding content of the sequence of human cytomegalovirus strain AD169.</title>
        <authorList>
            <person name="Chee M.S."/>
            <person name="Bankier A.T."/>
            <person name="Beck S."/>
            <person name="Bohni R."/>
            <person name="Brown C.M."/>
            <person name="Cerny R."/>
            <person name="Horsnell T."/>
            <person name="Hutchison C.A. III"/>
            <person name="Kouzarides T."/>
            <person name="Martignetti J.A."/>
            <person name="Preddie E."/>
            <person name="Satchwell S.C."/>
            <person name="Tomlinson P."/>
            <person name="Weston K.M."/>
            <person name="Barrell B.G."/>
        </authorList>
    </citation>
    <scope>NUCLEOTIDE SEQUENCE [LARGE SCALE GENOMIC DNA]</scope>
    <source>
        <strain>AD169 varUK</strain>
    </source>
</reference>
<reference key="2">
    <citation type="journal article" date="1997" name="J. Virol.">
        <title>The published DNA sequence of human cytomegalovirus strain AD169 lacks 929 base pairs of DNA affecting genes UL42 and UL43.</title>
        <authorList>
            <person name="Dargan D.J."/>
            <person name="Jamieson F.E."/>
            <person name="Maclean J."/>
            <person name="Dolan A."/>
            <person name="Addison C."/>
            <person name="McGeoch D.J."/>
        </authorList>
    </citation>
    <scope>NUCLEOTIDE SEQUENCE [LARGE SCALE GENOMIC DNA]</scope>
</reference>
<reference key="3">
    <citation type="journal article" date="2003" name="J. Gen. Virol.">
        <title>The human cytomegalovirus genome revisited: comparison with the chimpanzee cytomegalovirus genome.</title>
        <authorList>
            <person name="Davison A.J."/>
            <person name="Dolan A."/>
            <person name="Akter P."/>
            <person name="Addison C."/>
            <person name="Dargan D.J."/>
            <person name="Alcendor D.J."/>
            <person name="McGeoch D.J."/>
            <person name="Hayward G.S."/>
        </authorList>
    </citation>
    <scope>GENOME REANNOTATION</scope>
</reference>
<reference key="4">
    <citation type="journal article" date="2009" name="J. Virol.">
        <title>Human cytomegalovirus UL28 and UL29 open reading frames encode a spliced mRNA and stimulate accumulation of immediate-early RNAs.</title>
        <authorList>
            <person name="Mitchell D.P."/>
            <person name="Savaryn J.P."/>
            <person name="Moorman N.J."/>
            <person name="Shenk T."/>
            <person name="Terhune S.S."/>
        </authorList>
    </citation>
    <scope>FUNCTION</scope>
    <scope>SUBCELLULAR LOCATION</scope>
</reference>
<reference key="5">
    <citation type="journal article" date="2010" name="PLoS Pathog.">
        <title>Human cytomegalovirus UL29/28 protein interacts with components of the NuRD complex which promote accumulation of immediate-early RNA.</title>
        <authorList>
            <person name="Terhune S.S."/>
            <person name="Moorman N.J."/>
            <person name="Cristea I.M."/>
            <person name="Savaryn J.P."/>
            <person name="Cuevas-Bennett C."/>
            <person name="Rout M.P."/>
            <person name="Chait B.T."/>
            <person name="Shenk T."/>
        </authorList>
    </citation>
    <scope>INTERACTION WITH UL38; HOST HDAC1 AND HOST MTA2</scope>
</reference>
<evidence type="ECO:0000256" key="1">
    <source>
        <dbReference type="SAM" id="MobiDB-lite"/>
    </source>
</evidence>
<evidence type="ECO:0000269" key="2">
    <source>
    </source>
</evidence>
<evidence type="ECO:0000269" key="3">
    <source>
    </source>
</evidence>
<evidence type="ECO:0000305" key="4"/>
<accession>C0H677</accession>
<organismHost>
    <name type="scientific">Homo sapiens</name>
    <name type="common">Human</name>
    <dbReference type="NCBI Taxonomy" id="9606"/>
</organismHost>
<protein>
    <recommendedName>
        <fullName>Protein UL29/UL28</fullName>
    </recommendedName>
</protein>
<organism>
    <name type="scientific">Human cytomegalovirus (strain AD169)</name>
    <name type="common">HHV-5</name>
    <name type="synonym">Human herpesvirus 5</name>
    <dbReference type="NCBI Taxonomy" id="10360"/>
    <lineage>
        <taxon>Viruses</taxon>
        <taxon>Duplodnaviria</taxon>
        <taxon>Heunggongvirae</taxon>
        <taxon>Peploviricota</taxon>
        <taxon>Herviviricetes</taxon>
        <taxon>Herpesvirales</taxon>
        <taxon>Orthoherpesviridae</taxon>
        <taxon>Betaherpesvirinae</taxon>
        <taxon>Cytomegalovirus</taxon>
        <taxon>Cytomegalovirus humanbeta5</taxon>
        <taxon>Human cytomegalovirus</taxon>
    </lineage>
</organism>
<name>UL298_HCMVA</name>
<dbReference type="EMBL" id="BK000394">
    <property type="protein sequence ID" value="DAA06451.1"/>
    <property type="molecule type" value="Genomic_DNA"/>
</dbReference>
<dbReference type="Proteomes" id="UP000008992">
    <property type="component" value="Segment"/>
</dbReference>
<dbReference type="GO" id="GO:0030430">
    <property type="term" value="C:host cell cytoplasm"/>
    <property type="evidence" value="ECO:0007669"/>
    <property type="project" value="UniProtKB-SubCell"/>
</dbReference>
<dbReference type="GO" id="GO:0042025">
    <property type="term" value="C:host cell nucleus"/>
    <property type="evidence" value="ECO:0007669"/>
    <property type="project" value="UniProtKB-SubCell"/>
</dbReference>
<dbReference type="GO" id="GO:0044423">
    <property type="term" value="C:virion component"/>
    <property type="evidence" value="ECO:0007669"/>
    <property type="project" value="UniProtKB-KW"/>
</dbReference>
<dbReference type="InterPro" id="IPR003360">
    <property type="entry name" value="US22-like"/>
</dbReference>
<dbReference type="Pfam" id="PF02393">
    <property type="entry name" value="US22"/>
    <property type="match status" value="4"/>
</dbReference>